<gene>
    <name type="primary">entE</name>
</gene>
<keyword id="KW-0002">3D-structure</keyword>
<keyword id="KW-0903">Direct protein sequencing</keyword>
<keyword id="KW-1015">Disulfide bond</keyword>
<keyword id="KW-0260">Enterotoxin</keyword>
<keyword id="KW-0479">Metal-binding</keyword>
<keyword id="KW-0964">Secreted</keyword>
<keyword id="KW-0732">Signal</keyword>
<keyword id="KW-0766">Superantigen</keyword>
<keyword id="KW-0800">Toxin</keyword>
<keyword id="KW-0843">Virulence</keyword>
<keyword id="KW-0862">Zinc</keyword>
<organism>
    <name type="scientific">Staphylococcus aureus</name>
    <dbReference type="NCBI Taxonomy" id="1280"/>
    <lineage>
        <taxon>Bacteria</taxon>
        <taxon>Bacillati</taxon>
        <taxon>Bacillota</taxon>
        <taxon>Bacilli</taxon>
        <taxon>Bacillales</taxon>
        <taxon>Staphylococcaceae</taxon>
        <taxon>Staphylococcus</taxon>
    </lineage>
</organism>
<reference key="1">
    <citation type="journal article" date="1988" name="J. Bacteriol.">
        <title>Cloning and nucleotide sequence of the type E staphylococcal enterotoxin gene.</title>
        <authorList>
            <person name="Couch J.L."/>
            <person name="Soltis M.T."/>
            <person name="Betley M.J."/>
        </authorList>
    </citation>
    <scope>NUCLEOTIDE SEQUENCE [GENOMIC DNA]</scope>
    <scope>PROTEIN SEQUENCE OF 28-74</scope>
    <source>
        <strain>MJB265</strain>
    </source>
</reference>
<reference key="2">
    <citation type="journal article" date="1995" name="Nat. Struct. Biol.">
        <title>Residues defining V beta specificity in staphylococcal enterotoxins.</title>
        <authorList>
            <person name="Swaminathan S."/>
            <person name="Furey W.F. Jr."/>
            <person name="Pletcher J."/>
            <person name="Sax M."/>
        </authorList>
    </citation>
    <scope>3D-STRUCTURE MODELING</scope>
</reference>
<reference key="3">
    <citation type="journal article" date="2010" name="Eurosurveillance">
        <title>First evidence of a food poisoning outbreak due to staphylococcal enterotoxin type E, France, 2009.</title>
        <authorList>
            <person name="Ostyn A."/>
            <person name="De Buyser M.L."/>
            <person name="Guillier F."/>
            <person name="Groult J."/>
            <person name="Felix B."/>
            <person name="Salah S."/>
            <person name="Delmas G."/>
            <person name="Hennekinne J.A."/>
        </authorList>
    </citation>
    <scope>FUNCTION</scope>
</reference>
<reference key="4">
    <citation type="journal article" date="2013" name="PLoS ONE">
        <title>The tumor targeted superantigen ABR-217620 selectively engages TRBV7-9 and exploits TCR-pMHC affinity mimicry in mediating T cell cytotoxicity.</title>
        <authorList>
            <person name="Hedlund G."/>
            <person name="Eriksson H."/>
            <person name="Sundstedt A."/>
            <person name="Forsberg G."/>
            <person name="Jakobsen B.K."/>
            <person name="Pumphrey N."/>
            <person name="Roedstroem K."/>
            <person name="Lindkvist-Petersson K."/>
            <person name="Bjoerk P."/>
        </authorList>
    </citation>
    <scope>FUNCTION</scope>
    <scope>INTERACTION WITH HOST TRBV7-9; HLA-DRA AND HLA-DRB1</scope>
</reference>
<reference evidence="8" key="5">
    <citation type="journal article" date="2015" name="PLoS ONE">
        <title>Structure of Staphylococcal Enterotoxin E in Complex with TCR Defines the Role of TCR Loop Positioning in Superantigen Recognition.</title>
        <authorList>
            <person name="Rodstrom K.E."/>
            <person name="Regenthal P."/>
            <person name="Lindkvist-Petersson K."/>
        </authorList>
    </citation>
    <scope>X-RAY CRYSTALLOGRAPHY (2.50 ANGSTROMS) OF 25-257 IN COMPLEX WITH ZINC</scope>
    <scope>DISULFIDE BONDS</scope>
    <scope>INTERACTION WITH HOST TRBV7-9</scope>
</reference>
<reference evidence="9" key="6">
    <citation type="journal article" date="2016" name="Sci. Rep.">
        <title>Two common structural motifs for TCR recognition by staphylococcal enterotoxins.</title>
        <authorList>
            <person name="Rodstrom K.E."/>
            <person name="Regenthal P."/>
            <person name="Bahl C."/>
            <person name="Ford A."/>
            <person name="Baker D."/>
            <person name="Lindkvist-Petersson K."/>
        </authorList>
    </citation>
    <scope>X-RAY CRYSTALLOGRAPHY (2.40 ANGSTROMS) OF 25-257 IN COMPLEX WITH ZINC</scope>
    <scope>DISULFIDE BONDS</scope>
    <scope>INTERACTION WITH HOST TRBV7-9</scope>
</reference>
<proteinExistence type="evidence at protein level"/>
<sequence>MKKTAFILLLFIALTLTTSPLVNGSEKSEEINEKDLRKKSELQRNALSNLRQIYYYNEKAITENKESDDQFLENTLLFKGFFTGHPWYNDLLVDLGSKDATNKYKGKKVDLYGAYYGYQCAGGTPNKTACMYGGVTLHDNNRLTEEKKVPINLWIDGKQTTVPIDKVKTSKKEVTVQELDLQARHYLHGKFGLYNSDSFGGKVQRGLIVFHSSEGSTVSYDLFDAQGQYPDTLLRIYRDNKTINSENLHIDLYLYTT</sequence>
<name>ETXE_STAAU</name>
<evidence type="ECO:0000250" key="1"/>
<evidence type="ECO:0000269" key="2">
    <source>
    </source>
</evidence>
<evidence type="ECO:0000269" key="3">
    <source>
    </source>
</evidence>
<evidence type="ECO:0000269" key="4">
    <source>
    </source>
</evidence>
<evidence type="ECO:0000269" key="5">
    <source>
    </source>
</evidence>
<evidence type="ECO:0000269" key="6">
    <source>
    </source>
</evidence>
<evidence type="ECO:0000305" key="7"/>
<evidence type="ECO:0007744" key="8">
    <source>
        <dbReference type="PDB" id="4UDU"/>
    </source>
</evidence>
<evidence type="ECO:0007744" key="9">
    <source>
        <dbReference type="PDB" id="5FKA"/>
    </source>
</evidence>
<evidence type="ECO:0007829" key="10">
    <source>
        <dbReference type="PDB" id="4UDU"/>
    </source>
</evidence>
<evidence type="ECO:0007829" key="11">
    <source>
        <dbReference type="PDB" id="5FKA"/>
    </source>
</evidence>
<feature type="signal peptide" evidence="6">
    <location>
        <begin position="1"/>
        <end position="27"/>
    </location>
</feature>
<feature type="chain" id="PRO_0000035613" description="Enterotoxin type E">
    <location>
        <begin position="28"/>
        <end position="257"/>
    </location>
</feature>
<feature type="binding site" evidence="4 5 8 9">
    <location>
        <position position="211"/>
    </location>
    <ligand>
        <name>Zn(2+)</name>
        <dbReference type="ChEBI" id="CHEBI:29105"/>
    </ligand>
</feature>
<feature type="binding site" evidence="4 5 8 9">
    <location>
        <position position="249"/>
    </location>
    <ligand>
        <name>Zn(2+)</name>
        <dbReference type="ChEBI" id="CHEBI:29105"/>
    </ligand>
</feature>
<feature type="binding site" evidence="4 5 8 9">
    <location>
        <position position="251"/>
    </location>
    <ligand>
        <name>Zn(2+)</name>
        <dbReference type="ChEBI" id="CHEBI:29105"/>
    </ligand>
</feature>
<feature type="disulfide bond" evidence="4 5 8 9">
    <location>
        <begin position="120"/>
        <end position="130"/>
    </location>
</feature>
<feature type="helix" evidence="11">
    <location>
        <begin position="39"/>
        <end position="41"/>
    </location>
</feature>
<feature type="helix" evidence="11">
    <location>
        <begin position="46"/>
        <end position="55"/>
    </location>
</feature>
<feature type="strand" evidence="11">
    <location>
        <begin position="59"/>
        <end position="66"/>
    </location>
</feature>
<feature type="strand" evidence="11">
    <location>
        <begin position="75"/>
        <end position="78"/>
    </location>
</feature>
<feature type="strand" evidence="11">
    <location>
        <begin position="89"/>
        <end position="94"/>
    </location>
</feature>
<feature type="helix" evidence="11">
    <location>
        <begin position="98"/>
        <end position="104"/>
    </location>
</feature>
<feature type="strand" evidence="11">
    <location>
        <begin position="105"/>
        <end position="116"/>
    </location>
</feature>
<feature type="turn" evidence="11">
    <location>
        <begin position="118"/>
        <end position="121"/>
    </location>
</feature>
<feature type="strand" evidence="10">
    <location>
        <begin position="122"/>
        <end position="124"/>
    </location>
</feature>
<feature type="strand" evidence="11">
    <location>
        <begin position="128"/>
        <end position="132"/>
    </location>
</feature>
<feature type="strand" evidence="11">
    <location>
        <begin position="135"/>
        <end position="137"/>
    </location>
</feature>
<feature type="strand" evidence="11">
    <location>
        <begin position="142"/>
        <end position="148"/>
    </location>
</feature>
<feature type="strand" evidence="11">
    <location>
        <begin position="151"/>
        <end position="155"/>
    </location>
</feature>
<feature type="strand" evidence="11">
    <location>
        <begin position="158"/>
        <end position="161"/>
    </location>
</feature>
<feature type="strand" evidence="11">
    <location>
        <begin position="166"/>
        <end position="175"/>
    </location>
</feature>
<feature type="helix" evidence="11">
    <location>
        <begin position="176"/>
        <end position="191"/>
    </location>
</feature>
<feature type="turn" evidence="11">
    <location>
        <begin position="197"/>
        <end position="200"/>
    </location>
</feature>
<feature type="strand" evidence="11">
    <location>
        <begin position="205"/>
        <end position="211"/>
    </location>
</feature>
<feature type="strand" evidence="10">
    <location>
        <begin position="213"/>
        <end position="215"/>
    </location>
</feature>
<feature type="strand" evidence="11">
    <location>
        <begin position="217"/>
        <end position="221"/>
    </location>
</feature>
<feature type="strand" evidence="11">
    <location>
        <begin position="227"/>
        <end position="229"/>
    </location>
</feature>
<feature type="helix" evidence="11">
    <location>
        <begin position="230"/>
        <end position="233"/>
    </location>
</feature>
<feature type="helix" evidence="11">
    <location>
        <begin position="234"/>
        <end position="237"/>
    </location>
</feature>
<feature type="strand" evidence="11">
    <location>
        <begin position="242"/>
        <end position="244"/>
    </location>
</feature>
<feature type="strand" evidence="11">
    <location>
        <begin position="249"/>
        <end position="255"/>
    </location>
</feature>
<dbReference type="EMBL" id="M21319">
    <property type="protein sequence ID" value="AAA26617.1"/>
    <property type="molecule type" value="Genomic_DNA"/>
</dbReference>
<dbReference type="PIR" id="A28179">
    <property type="entry name" value="A28179"/>
</dbReference>
<dbReference type="PDB" id="4UDU">
    <property type="method" value="X-ray"/>
    <property type="resolution" value="2.50 A"/>
    <property type="chains" value="C=25-257"/>
</dbReference>
<dbReference type="PDB" id="5FKA">
    <property type="method" value="X-ray"/>
    <property type="resolution" value="2.40 A"/>
    <property type="chains" value="C=25-257"/>
</dbReference>
<dbReference type="PDBsum" id="4UDU"/>
<dbReference type="PDBsum" id="5FKA"/>
<dbReference type="SMR" id="P12993"/>
<dbReference type="Allergome" id="2428">
    <property type="allergen name" value="Sta a SEE"/>
</dbReference>
<dbReference type="EvolutionaryTrace" id="P12993"/>
<dbReference type="PRO" id="PR:P12993"/>
<dbReference type="GO" id="GO:0005576">
    <property type="term" value="C:extracellular region"/>
    <property type="evidence" value="ECO:0007669"/>
    <property type="project" value="UniProtKB-SubCell"/>
</dbReference>
<dbReference type="GO" id="GO:0046872">
    <property type="term" value="F:metal ion binding"/>
    <property type="evidence" value="ECO:0007669"/>
    <property type="project" value="UniProtKB-KW"/>
</dbReference>
<dbReference type="GO" id="GO:0090729">
    <property type="term" value="F:toxin activity"/>
    <property type="evidence" value="ECO:0007669"/>
    <property type="project" value="UniProtKB-KW"/>
</dbReference>
<dbReference type="Gene3D" id="2.40.50.110">
    <property type="match status" value="1"/>
</dbReference>
<dbReference type="Gene3D" id="3.10.20.120">
    <property type="match status" value="1"/>
</dbReference>
<dbReference type="InterPro" id="IPR008992">
    <property type="entry name" value="Enterotoxin"/>
</dbReference>
<dbReference type="InterPro" id="IPR006126">
    <property type="entry name" value="Staph/Strept_toxin_CS"/>
</dbReference>
<dbReference type="InterPro" id="IPR006173">
    <property type="entry name" value="Staph_tox_OB"/>
</dbReference>
<dbReference type="InterPro" id="IPR016091">
    <property type="entry name" value="SuperAg_toxin_C"/>
</dbReference>
<dbReference type="InterPro" id="IPR013307">
    <property type="entry name" value="Superantigen_bac"/>
</dbReference>
<dbReference type="InterPro" id="IPR006123">
    <property type="entry name" value="Toxin_b-grasp_Staph/Strep"/>
</dbReference>
<dbReference type="InterPro" id="IPR006177">
    <property type="entry name" value="Toxin_bac"/>
</dbReference>
<dbReference type="Pfam" id="PF02876">
    <property type="entry name" value="Stap_Strp_tox_C"/>
    <property type="match status" value="1"/>
</dbReference>
<dbReference type="Pfam" id="PF01123">
    <property type="entry name" value="Stap_Strp_toxin"/>
    <property type="match status" value="1"/>
</dbReference>
<dbReference type="PRINTS" id="PR00279">
    <property type="entry name" value="BACTRLTOXIN"/>
</dbReference>
<dbReference type="PRINTS" id="PR01898">
    <property type="entry name" value="SAGSUPRFAMLY"/>
</dbReference>
<dbReference type="SUPFAM" id="SSF50203">
    <property type="entry name" value="Bacterial enterotoxins"/>
    <property type="match status" value="1"/>
</dbReference>
<dbReference type="SUPFAM" id="SSF54334">
    <property type="entry name" value="Superantigen toxins, C-terminal domain"/>
    <property type="match status" value="1"/>
</dbReference>
<dbReference type="PROSITE" id="PS00277">
    <property type="entry name" value="STAPH_STREP_TOXIN_1"/>
    <property type="match status" value="1"/>
</dbReference>
<dbReference type="PROSITE" id="PS00278">
    <property type="entry name" value="STAPH_STREP_TOXIN_2"/>
    <property type="match status" value="1"/>
</dbReference>
<protein>
    <recommendedName>
        <fullName>Enterotoxin type E</fullName>
    </recommendedName>
    <alternativeName>
        <fullName>SEE</fullName>
    </alternativeName>
</protein>
<accession>P12993</accession>
<comment type="function">
    <text evidence="2 3">Staphylococcal enterotoxin that activates the host immune system by binding as unprocessed molecules to major histocompatibility (MHC) complex class II and T-cell receptor (TCR) molecules. In turn, this ternary complex activates a large number of T-lymphocytes initiating a systemic release of pro-inflammatory cytokines (PubMed:24194959). Also causes the intoxication staphylococcal food poisoning syndrome (PubMed:20394711).</text>
</comment>
<comment type="cofactor">
    <cofactor evidence="1">
        <name>Zn(2+)</name>
        <dbReference type="ChEBI" id="CHEBI:29105"/>
    </cofactor>
    <text evidence="1">Binds 1 zinc ion per subunit. The zinc ion is necessary for the toxin interaction with MHC class II.</text>
</comment>
<comment type="subunit">
    <text evidence="3 4 5">Interacts with host MHC class II molecules composed of alpha/HLA-DRA and beta/HLA-DRB1 chains (PubMed:24194959). Interacts with host T-cell receptor beta variable TRBV7-9 (PubMed:24194959, PubMed:26147596, PubMed:27180909).</text>
</comment>
<comment type="subcellular location">
    <subcellularLocation>
        <location>Secreted</location>
    </subcellularLocation>
</comment>
<comment type="similarity">
    <text evidence="7">Belongs to the staphylococcal/streptococcal toxin family.</text>
</comment>